<sequence length="140" mass="16016">MKKIVCVAIVGKGNNPLFIQDFSSSITDENKLKLHYIVHCSLDIIEDKPGSNKKLPSDMYLGLLYPTEDYKVYGYLTNTKIKFIIVVLDTSDIKDSDLKLFFKRLQTLFINTTSNPFYKPNSKVESKKFLQEVTNLVPSL</sequence>
<accession>Q54CU7</accession>
<reference key="1">
    <citation type="journal article" date="2005" name="Nature">
        <title>The genome of the social amoeba Dictyostelium discoideum.</title>
        <authorList>
            <person name="Eichinger L."/>
            <person name="Pachebat J.A."/>
            <person name="Gloeckner G."/>
            <person name="Rajandream M.A."/>
            <person name="Sucgang R."/>
            <person name="Berriman M."/>
            <person name="Song J."/>
            <person name="Olsen R."/>
            <person name="Szafranski K."/>
            <person name="Xu Q."/>
            <person name="Tunggal B."/>
            <person name="Kummerfeld S."/>
            <person name="Madera M."/>
            <person name="Konfortov B.A."/>
            <person name="Rivero F."/>
            <person name="Bankier A.T."/>
            <person name="Lehmann R."/>
            <person name="Hamlin N."/>
            <person name="Davies R."/>
            <person name="Gaudet P."/>
            <person name="Fey P."/>
            <person name="Pilcher K."/>
            <person name="Chen G."/>
            <person name="Saunders D."/>
            <person name="Sodergren E.J."/>
            <person name="Davis P."/>
            <person name="Kerhornou A."/>
            <person name="Nie X."/>
            <person name="Hall N."/>
            <person name="Anjard C."/>
            <person name="Hemphill L."/>
            <person name="Bason N."/>
            <person name="Farbrother P."/>
            <person name="Desany B."/>
            <person name="Just E."/>
            <person name="Morio T."/>
            <person name="Rost R."/>
            <person name="Churcher C.M."/>
            <person name="Cooper J."/>
            <person name="Haydock S."/>
            <person name="van Driessche N."/>
            <person name="Cronin A."/>
            <person name="Goodhead I."/>
            <person name="Muzny D.M."/>
            <person name="Mourier T."/>
            <person name="Pain A."/>
            <person name="Lu M."/>
            <person name="Harper D."/>
            <person name="Lindsay R."/>
            <person name="Hauser H."/>
            <person name="James K.D."/>
            <person name="Quiles M."/>
            <person name="Madan Babu M."/>
            <person name="Saito T."/>
            <person name="Buchrieser C."/>
            <person name="Wardroper A."/>
            <person name="Felder M."/>
            <person name="Thangavelu M."/>
            <person name="Johnson D."/>
            <person name="Knights A."/>
            <person name="Loulseged H."/>
            <person name="Mungall K.L."/>
            <person name="Oliver K."/>
            <person name="Price C."/>
            <person name="Quail M.A."/>
            <person name="Urushihara H."/>
            <person name="Hernandez J."/>
            <person name="Rabbinowitsch E."/>
            <person name="Steffen D."/>
            <person name="Sanders M."/>
            <person name="Ma J."/>
            <person name="Kohara Y."/>
            <person name="Sharp S."/>
            <person name="Simmonds M.N."/>
            <person name="Spiegler S."/>
            <person name="Tivey A."/>
            <person name="Sugano S."/>
            <person name="White B."/>
            <person name="Walker D."/>
            <person name="Woodward J.R."/>
            <person name="Winckler T."/>
            <person name="Tanaka Y."/>
            <person name="Shaulsky G."/>
            <person name="Schleicher M."/>
            <person name="Weinstock G.M."/>
            <person name="Rosenthal A."/>
            <person name="Cox E.C."/>
            <person name="Chisholm R.L."/>
            <person name="Gibbs R.A."/>
            <person name="Loomis W.F."/>
            <person name="Platzer M."/>
            <person name="Kay R.R."/>
            <person name="Williams J.G."/>
            <person name="Dear P.H."/>
            <person name="Noegel A.A."/>
            <person name="Barrell B.G."/>
            <person name="Kuspa A."/>
        </authorList>
    </citation>
    <scope>NUCLEOTIDE SEQUENCE [LARGE SCALE GENOMIC DNA]</scope>
    <source>
        <strain>AX4</strain>
    </source>
</reference>
<dbReference type="EMBL" id="AAFI02000194">
    <property type="protein sequence ID" value="EAL61148.1"/>
    <property type="molecule type" value="Genomic_DNA"/>
</dbReference>
<dbReference type="RefSeq" id="XP_629573.1">
    <property type="nucleotide sequence ID" value="XM_629571.1"/>
</dbReference>
<dbReference type="SMR" id="Q54CU7"/>
<dbReference type="FunCoup" id="Q54CU7">
    <property type="interactions" value="290"/>
</dbReference>
<dbReference type="STRING" id="44689.Q54CU7"/>
<dbReference type="PaxDb" id="44689-DDB0266384"/>
<dbReference type="EnsemblProtists" id="EAL61148">
    <property type="protein sequence ID" value="EAL61148"/>
    <property type="gene ID" value="DDB_G0292690"/>
</dbReference>
<dbReference type="GeneID" id="8628834"/>
<dbReference type="KEGG" id="ddi:DDB_G0292690"/>
<dbReference type="dictyBase" id="DDB_G0292690">
    <property type="gene designation" value="trappc2l"/>
</dbReference>
<dbReference type="VEuPathDB" id="AmoebaDB:DDB_G0292690"/>
<dbReference type="eggNOG" id="KOG3444">
    <property type="taxonomic scope" value="Eukaryota"/>
</dbReference>
<dbReference type="HOGENOM" id="CLU_085828_2_3_1"/>
<dbReference type="InParanoid" id="Q54CU7"/>
<dbReference type="OMA" id="FHYIVHC"/>
<dbReference type="PhylomeDB" id="Q54CU7"/>
<dbReference type="Reactome" id="R-DDI-204005">
    <property type="pathway name" value="COPII-mediated vesicle transport"/>
</dbReference>
<dbReference type="Reactome" id="R-DDI-8876198">
    <property type="pathway name" value="RAB GEFs exchange GTP for GDP on RABs"/>
</dbReference>
<dbReference type="PRO" id="PR:Q54CU7"/>
<dbReference type="Proteomes" id="UP000002195">
    <property type="component" value="Chromosome 6"/>
</dbReference>
<dbReference type="GO" id="GO:0005737">
    <property type="term" value="C:cytoplasm"/>
    <property type="evidence" value="ECO:0000318"/>
    <property type="project" value="GO_Central"/>
</dbReference>
<dbReference type="GO" id="GO:0005634">
    <property type="term" value="C:nucleus"/>
    <property type="evidence" value="ECO:0000318"/>
    <property type="project" value="GO_Central"/>
</dbReference>
<dbReference type="GO" id="GO:0030008">
    <property type="term" value="C:TRAPP complex"/>
    <property type="evidence" value="ECO:0000318"/>
    <property type="project" value="GO_Central"/>
</dbReference>
<dbReference type="GO" id="GO:0006888">
    <property type="term" value="P:endoplasmic reticulum to Golgi vesicle-mediated transport"/>
    <property type="evidence" value="ECO:0000318"/>
    <property type="project" value="GO_Central"/>
</dbReference>
<dbReference type="CDD" id="cd14854">
    <property type="entry name" value="TRAPPC2L"/>
    <property type="match status" value="1"/>
</dbReference>
<dbReference type="Gene3D" id="3.30.450.70">
    <property type="match status" value="1"/>
</dbReference>
<dbReference type="InterPro" id="IPR011012">
    <property type="entry name" value="Longin-like_dom_sf"/>
</dbReference>
<dbReference type="InterPro" id="IPR006722">
    <property type="entry name" value="Sedlin"/>
</dbReference>
<dbReference type="InterPro" id="IPR044760">
    <property type="entry name" value="TRAPPC2L"/>
</dbReference>
<dbReference type="PANTHER" id="PTHR12403">
    <property type="entry name" value="TRAFFICKING PROTEIN PARTICLE COMPLEX SUBUNIT 2"/>
    <property type="match status" value="1"/>
</dbReference>
<dbReference type="Pfam" id="PF04628">
    <property type="entry name" value="Sedlin_N"/>
    <property type="match status" value="1"/>
</dbReference>
<dbReference type="SUPFAM" id="SSF64356">
    <property type="entry name" value="SNARE-like"/>
    <property type="match status" value="1"/>
</dbReference>
<comment type="similarity">
    <text evidence="1">Belongs to the TRAPP small subunits family. Sedlin subfamily.</text>
</comment>
<organism>
    <name type="scientific">Dictyostelium discoideum</name>
    <name type="common">Social amoeba</name>
    <dbReference type="NCBI Taxonomy" id="44689"/>
    <lineage>
        <taxon>Eukaryota</taxon>
        <taxon>Amoebozoa</taxon>
        <taxon>Evosea</taxon>
        <taxon>Eumycetozoa</taxon>
        <taxon>Dictyostelia</taxon>
        <taxon>Dictyosteliales</taxon>
        <taxon>Dictyosteliaceae</taxon>
        <taxon>Dictyostelium</taxon>
    </lineage>
</organism>
<keyword id="KW-1185">Reference proteome</keyword>
<evidence type="ECO:0000305" key="1"/>
<name>TPC2L_DICDI</name>
<feature type="chain" id="PRO_0000327569" description="Trafficking protein particle complex subunit 2-like protein">
    <location>
        <begin position="1"/>
        <end position="140"/>
    </location>
</feature>
<protein>
    <recommendedName>
        <fullName>Trafficking protein particle complex subunit 2-like protein</fullName>
    </recommendedName>
</protein>
<proteinExistence type="inferred from homology"/>
<gene>
    <name type="primary">trappc2l</name>
    <name type="ORF">DDB_G0292690</name>
</gene>